<sequence length="445" mass="50501">MGDKEKKPLKYRILTYGCQMNVRDSETIAGLLEGSGFNQAEDLSEADLIVFNTCSVRHSAENKVYGKLGEIASLKKKRPELLIAFGGCMAQLPEVRQKLKKRGVDVVFGTHNIHELPYLIARAKEKRSPVFEVWEKEGSIVEPLPSCRKPGLSAFVNIMFGCNNFCSYCIVPYTRGRERSRKADDIIRELEELAAAGYKEVTLLGQNVNSYGRGLGEKIEFADLLYRANSVAGIERIRFTTSHPKDVSDRLLQAIAECEKLCEHIHAPLQAGSNRILQRMNRNYSREHYLKLVERMRHYVPGVSITSDLIVGFPGETEEDFLETLDMVERVRFDAAFTFLYSQRSGTRAAELAEQIPLEEKKQRLERLNRRQYQIATEINQELQGSIQEVLVEGPSKTNPQKLTSRTRSNRIVIFSGGKDLIGRLINVKITEAKTFSLFGEIFNE</sequence>
<name>MIAB_SYNWW</name>
<organism>
    <name type="scientific">Syntrophomonas wolfei subsp. wolfei (strain DSM 2245B / Goettingen)</name>
    <dbReference type="NCBI Taxonomy" id="335541"/>
    <lineage>
        <taxon>Bacteria</taxon>
        <taxon>Bacillati</taxon>
        <taxon>Bacillota</taxon>
        <taxon>Clostridia</taxon>
        <taxon>Eubacteriales</taxon>
        <taxon>Syntrophomonadaceae</taxon>
        <taxon>Syntrophomonas</taxon>
    </lineage>
</organism>
<gene>
    <name evidence="1" type="primary">miaB</name>
    <name type="ordered locus">Swol_0972</name>
</gene>
<reference key="1">
    <citation type="journal article" date="2010" name="Environ. Microbiol.">
        <title>The genome of Syntrophomonas wolfei: new insights into syntrophic metabolism and biohydrogen production.</title>
        <authorList>
            <person name="Sieber J.R."/>
            <person name="Sims D.R."/>
            <person name="Han C."/>
            <person name="Kim E."/>
            <person name="Lykidis A."/>
            <person name="Lapidus A.L."/>
            <person name="McDonnald E."/>
            <person name="Rohlin L."/>
            <person name="Culley D.E."/>
            <person name="Gunsalus R."/>
            <person name="McInerney M.J."/>
        </authorList>
    </citation>
    <scope>NUCLEOTIDE SEQUENCE [LARGE SCALE GENOMIC DNA]</scope>
    <source>
        <strain>DSM 2245B / Goettingen</strain>
    </source>
</reference>
<accession>Q0AYB7</accession>
<keyword id="KW-0004">4Fe-4S</keyword>
<keyword id="KW-0963">Cytoplasm</keyword>
<keyword id="KW-0408">Iron</keyword>
<keyword id="KW-0411">Iron-sulfur</keyword>
<keyword id="KW-0479">Metal-binding</keyword>
<keyword id="KW-1185">Reference proteome</keyword>
<keyword id="KW-0949">S-adenosyl-L-methionine</keyword>
<keyword id="KW-0808">Transferase</keyword>
<keyword id="KW-0819">tRNA processing</keyword>
<evidence type="ECO:0000255" key="1">
    <source>
        <dbReference type="HAMAP-Rule" id="MF_01864"/>
    </source>
</evidence>
<evidence type="ECO:0000255" key="2">
    <source>
        <dbReference type="PROSITE-ProRule" id="PRU01266"/>
    </source>
</evidence>
<protein>
    <recommendedName>
        <fullName evidence="1">tRNA-2-methylthio-N(6)-dimethylallyladenosine synthase</fullName>
        <ecNumber evidence="1">2.8.4.3</ecNumber>
    </recommendedName>
    <alternativeName>
        <fullName evidence="1">(Dimethylallyl)adenosine tRNA methylthiotransferase MiaB</fullName>
    </alternativeName>
    <alternativeName>
        <fullName evidence="1">tRNA-i(6)A37 methylthiotransferase</fullName>
    </alternativeName>
</protein>
<proteinExistence type="inferred from homology"/>
<comment type="function">
    <text evidence="1">Catalyzes the methylthiolation of N6-(dimethylallyl)adenosine (i(6)A), leading to the formation of 2-methylthio-N6-(dimethylallyl)adenosine (ms(2)i(6)A) at position 37 in tRNAs that read codons beginning with uridine.</text>
</comment>
<comment type="catalytic activity">
    <reaction evidence="1">
        <text>N(6)-dimethylallyladenosine(37) in tRNA + (sulfur carrier)-SH + AH2 + 2 S-adenosyl-L-methionine = 2-methylsulfanyl-N(6)-dimethylallyladenosine(37) in tRNA + (sulfur carrier)-H + 5'-deoxyadenosine + L-methionine + A + S-adenosyl-L-homocysteine + 2 H(+)</text>
        <dbReference type="Rhea" id="RHEA:37067"/>
        <dbReference type="Rhea" id="RHEA-COMP:10375"/>
        <dbReference type="Rhea" id="RHEA-COMP:10376"/>
        <dbReference type="Rhea" id="RHEA-COMP:14737"/>
        <dbReference type="Rhea" id="RHEA-COMP:14739"/>
        <dbReference type="ChEBI" id="CHEBI:13193"/>
        <dbReference type="ChEBI" id="CHEBI:15378"/>
        <dbReference type="ChEBI" id="CHEBI:17319"/>
        <dbReference type="ChEBI" id="CHEBI:17499"/>
        <dbReference type="ChEBI" id="CHEBI:29917"/>
        <dbReference type="ChEBI" id="CHEBI:57844"/>
        <dbReference type="ChEBI" id="CHEBI:57856"/>
        <dbReference type="ChEBI" id="CHEBI:59789"/>
        <dbReference type="ChEBI" id="CHEBI:64428"/>
        <dbReference type="ChEBI" id="CHEBI:74415"/>
        <dbReference type="ChEBI" id="CHEBI:74417"/>
        <dbReference type="EC" id="2.8.4.3"/>
    </reaction>
</comment>
<comment type="cofactor">
    <cofactor evidence="1">
        <name>[4Fe-4S] cluster</name>
        <dbReference type="ChEBI" id="CHEBI:49883"/>
    </cofactor>
    <text evidence="1">Binds 2 [4Fe-4S] clusters. One cluster is coordinated with 3 cysteines and an exchangeable S-adenosyl-L-methionine.</text>
</comment>
<comment type="subunit">
    <text evidence="1">Monomer.</text>
</comment>
<comment type="subcellular location">
    <subcellularLocation>
        <location evidence="1">Cytoplasm</location>
    </subcellularLocation>
</comment>
<comment type="similarity">
    <text evidence="1">Belongs to the methylthiotransferase family. MiaB subfamily.</text>
</comment>
<dbReference type="EC" id="2.8.4.3" evidence="1"/>
<dbReference type="EMBL" id="CP000448">
    <property type="protein sequence ID" value="ABI68287.1"/>
    <property type="molecule type" value="Genomic_DNA"/>
</dbReference>
<dbReference type="RefSeq" id="WP_011640392.1">
    <property type="nucleotide sequence ID" value="NC_008346.1"/>
</dbReference>
<dbReference type="SMR" id="Q0AYB7"/>
<dbReference type="STRING" id="335541.Swol_0972"/>
<dbReference type="KEGG" id="swo:Swol_0972"/>
<dbReference type="eggNOG" id="COG0621">
    <property type="taxonomic scope" value="Bacteria"/>
</dbReference>
<dbReference type="HOGENOM" id="CLU_018697_2_0_9"/>
<dbReference type="OrthoDB" id="9805215at2"/>
<dbReference type="Proteomes" id="UP000001968">
    <property type="component" value="Chromosome"/>
</dbReference>
<dbReference type="GO" id="GO:0005829">
    <property type="term" value="C:cytosol"/>
    <property type="evidence" value="ECO:0007669"/>
    <property type="project" value="TreeGrafter"/>
</dbReference>
<dbReference type="GO" id="GO:0051539">
    <property type="term" value="F:4 iron, 4 sulfur cluster binding"/>
    <property type="evidence" value="ECO:0007669"/>
    <property type="project" value="UniProtKB-UniRule"/>
</dbReference>
<dbReference type="GO" id="GO:0046872">
    <property type="term" value="F:metal ion binding"/>
    <property type="evidence" value="ECO:0007669"/>
    <property type="project" value="UniProtKB-KW"/>
</dbReference>
<dbReference type="GO" id="GO:0035597">
    <property type="term" value="F:N6-isopentenyladenosine methylthiotransferase activity"/>
    <property type="evidence" value="ECO:0007669"/>
    <property type="project" value="TreeGrafter"/>
</dbReference>
<dbReference type="CDD" id="cd01335">
    <property type="entry name" value="Radical_SAM"/>
    <property type="match status" value="1"/>
</dbReference>
<dbReference type="FunFam" id="3.40.50.12160:FF:000003">
    <property type="entry name" value="CDK5 regulatory subunit-associated protein 1"/>
    <property type="match status" value="1"/>
</dbReference>
<dbReference type="FunFam" id="3.80.30.20:FF:000001">
    <property type="entry name" value="tRNA-2-methylthio-N(6)-dimethylallyladenosine synthase 2"/>
    <property type="match status" value="1"/>
</dbReference>
<dbReference type="Gene3D" id="3.40.50.12160">
    <property type="entry name" value="Methylthiotransferase, N-terminal domain"/>
    <property type="match status" value="1"/>
</dbReference>
<dbReference type="Gene3D" id="3.80.30.20">
    <property type="entry name" value="tm_1862 like domain"/>
    <property type="match status" value="1"/>
</dbReference>
<dbReference type="HAMAP" id="MF_01864">
    <property type="entry name" value="tRNA_metthiotr_MiaB"/>
    <property type="match status" value="1"/>
</dbReference>
<dbReference type="InterPro" id="IPR006638">
    <property type="entry name" value="Elp3/MiaA/NifB-like_rSAM"/>
</dbReference>
<dbReference type="InterPro" id="IPR005839">
    <property type="entry name" value="Methylthiotransferase"/>
</dbReference>
<dbReference type="InterPro" id="IPR020612">
    <property type="entry name" value="Methylthiotransferase_CS"/>
</dbReference>
<dbReference type="InterPro" id="IPR013848">
    <property type="entry name" value="Methylthiotransferase_N"/>
</dbReference>
<dbReference type="InterPro" id="IPR038135">
    <property type="entry name" value="Methylthiotransferase_N_sf"/>
</dbReference>
<dbReference type="InterPro" id="IPR006463">
    <property type="entry name" value="MiaB_methiolase"/>
</dbReference>
<dbReference type="InterPro" id="IPR007197">
    <property type="entry name" value="rSAM"/>
</dbReference>
<dbReference type="InterPro" id="IPR023404">
    <property type="entry name" value="rSAM_horseshoe"/>
</dbReference>
<dbReference type="InterPro" id="IPR002792">
    <property type="entry name" value="TRAM_dom"/>
</dbReference>
<dbReference type="NCBIfam" id="TIGR01574">
    <property type="entry name" value="miaB-methiolase"/>
    <property type="match status" value="1"/>
</dbReference>
<dbReference type="NCBIfam" id="TIGR00089">
    <property type="entry name" value="MiaB/RimO family radical SAM methylthiotransferase"/>
    <property type="match status" value="1"/>
</dbReference>
<dbReference type="PANTHER" id="PTHR43020">
    <property type="entry name" value="CDK5 REGULATORY SUBUNIT-ASSOCIATED PROTEIN 1"/>
    <property type="match status" value="1"/>
</dbReference>
<dbReference type="PANTHER" id="PTHR43020:SF2">
    <property type="entry name" value="MITOCHONDRIAL TRNA METHYLTHIOTRANSFERASE CDK5RAP1"/>
    <property type="match status" value="1"/>
</dbReference>
<dbReference type="Pfam" id="PF04055">
    <property type="entry name" value="Radical_SAM"/>
    <property type="match status" value="1"/>
</dbReference>
<dbReference type="Pfam" id="PF01938">
    <property type="entry name" value="TRAM"/>
    <property type="match status" value="1"/>
</dbReference>
<dbReference type="Pfam" id="PF00919">
    <property type="entry name" value="UPF0004"/>
    <property type="match status" value="1"/>
</dbReference>
<dbReference type="SFLD" id="SFLDF00273">
    <property type="entry name" value="(dimethylallyl)adenosine_tRNA"/>
    <property type="match status" value="1"/>
</dbReference>
<dbReference type="SFLD" id="SFLDG01082">
    <property type="entry name" value="B12-binding_domain_containing"/>
    <property type="match status" value="1"/>
</dbReference>
<dbReference type="SFLD" id="SFLDG01061">
    <property type="entry name" value="methylthiotransferase"/>
    <property type="match status" value="1"/>
</dbReference>
<dbReference type="SMART" id="SM00729">
    <property type="entry name" value="Elp3"/>
    <property type="match status" value="1"/>
</dbReference>
<dbReference type="SUPFAM" id="SSF102114">
    <property type="entry name" value="Radical SAM enzymes"/>
    <property type="match status" value="1"/>
</dbReference>
<dbReference type="PROSITE" id="PS51449">
    <property type="entry name" value="MTTASE_N"/>
    <property type="match status" value="1"/>
</dbReference>
<dbReference type="PROSITE" id="PS01278">
    <property type="entry name" value="MTTASE_RADICAL"/>
    <property type="match status" value="1"/>
</dbReference>
<dbReference type="PROSITE" id="PS51918">
    <property type="entry name" value="RADICAL_SAM"/>
    <property type="match status" value="1"/>
</dbReference>
<dbReference type="PROSITE" id="PS50926">
    <property type="entry name" value="TRAM"/>
    <property type="match status" value="1"/>
</dbReference>
<feature type="chain" id="PRO_0000374604" description="tRNA-2-methylthio-N(6)-dimethylallyladenosine synthase">
    <location>
        <begin position="1"/>
        <end position="445"/>
    </location>
</feature>
<feature type="domain" description="MTTase N-terminal" evidence="1">
    <location>
        <begin position="9"/>
        <end position="125"/>
    </location>
</feature>
<feature type="domain" description="Radical SAM core" evidence="2">
    <location>
        <begin position="148"/>
        <end position="378"/>
    </location>
</feature>
<feature type="domain" description="TRAM" evidence="1">
    <location>
        <begin position="381"/>
        <end position="444"/>
    </location>
</feature>
<feature type="binding site" evidence="1">
    <location>
        <position position="18"/>
    </location>
    <ligand>
        <name>[4Fe-4S] cluster</name>
        <dbReference type="ChEBI" id="CHEBI:49883"/>
        <label>1</label>
    </ligand>
</feature>
<feature type="binding site" evidence="1">
    <location>
        <position position="54"/>
    </location>
    <ligand>
        <name>[4Fe-4S] cluster</name>
        <dbReference type="ChEBI" id="CHEBI:49883"/>
        <label>1</label>
    </ligand>
</feature>
<feature type="binding site" evidence="1">
    <location>
        <position position="88"/>
    </location>
    <ligand>
        <name>[4Fe-4S] cluster</name>
        <dbReference type="ChEBI" id="CHEBI:49883"/>
        <label>1</label>
    </ligand>
</feature>
<feature type="binding site" evidence="1">
    <location>
        <position position="162"/>
    </location>
    <ligand>
        <name>[4Fe-4S] cluster</name>
        <dbReference type="ChEBI" id="CHEBI:49883"/>
        <label>2</label>
        <note>4Fe-4S-S-AdoMet</note>
    </ligand>
</feature>
<feature type="binding site" evidence="1">
    <location>
        <position position="166"/>
    </location>
    <ligand>
        <name>[4Fe-4S] cluster</name>
        <dbReference type="ChEBI" id="CHEBI:49883"/>
        <label>2</label>
        <note>4Fe-4S-S-AdoMet</note>
    </ligand>
</feature>
<feature type="binding site" evidence="1">
    <location>
        <position position="169"/>
    </location>
    <ligand>
        <name>[4Fe-4S] cluster</name>
        <dbReference type="ChEBI" id="CHEBI:49883"/>
        <label>2</label>
        <note>4Fe-4S-S-AdoMet</note>
    </ligand>
</feature>